<feature type="chain" id="PRO_0000283151" description="Putative FBD-associated F-box protein At5g50270">
    <location>
        <begin position="1"/>
        <end position="408"/>
    </location>
</feature>
<feature type="domain" description="F-box">
    <location>
        <begin position="1"/>
        <end position="54"/>
    </location>
</feature>
<feature type="domain" description="FBD">
    <location>
        <begin position="345"/>
        <end position="408"/>
    </location>
</feature>
<evidence type="ECO:0000305" key="1"/>
<reference key="1">
    <citation type="journal article" date="2000" name="DNA Res.">
        <title>Structural analysis of Arabidopsis thaliana chromosome 5. X. Sequence features of the regions of 3,076,755 bp covered by sixty P1 and TAC clones.</title>
        <authorList>
            <person name="Sato S."/>
            <person name="Nakamura Y."/>
            <person name="Kaneko T."/>
            <person name="Katoh T."/>
            <person name="Asamizu E."/>
            <person name="Kotani H."/>
            <person name="Tabata S."/>
        </authorList>
    </citation>
    <scope>NUCLEOTIDE SEQUENCE [LARGE SCALE GENOMIC DNA]</scope>
    <source>
        <strain>cv. Columbia</strain>
    </source>
</reference>
<reference key="2">
    <citation type="journal article" date="2017" name="Plant J.">
        <title>Araport11: a complete reannotation of the Arabidopsis thaliana reference genome.</title>
        <authorList>
            <person name="Cheng C.Y."/>
            <person name="Krishnakumar V."/>
            <person name="Chan A.P."/>
            <person name="Thibaud-Nissen F."/>
            <person name="Schobel S."/>
            <person name="Town C.D."/>
        </authorList>
    </citation>
    <scope>GENOME REANNOTATION</scope>
    <source>
        <strain>cv. Columbia</strain>
    </source>
</reference>
<sequence length="408" mass="46194">MDRISGLPDELLLRVLSLLPNVKDVVVTMVLSKRWQFLWMMVPKLVYDDSYQNLEYGKFSRFVDRSLFMRKAPGIETLHFKLGQNCGNGDIQWWIRAASKFCFRELIIEINCSTSASPSILPRSLYTECRMLVTLKLKKAVLVDVSSPTCFPSLKNLSLVSVKYPGNEFVKSLLSSCHVLEDLVVEQCINDNVTIFSVKVPSLKSLVLRTSKERAPDGESGFVVEAPSLEYLDIDQTGGFCVIENGMPNLAEAYVSVLHHHPVKFLSSITSVKRLYLCLLPHSILSCMQDMYPIRCVFHRLVHITLCTCDDEWLNLLACLLKGSPKLISLKLEKHHGHLICSPSPLRDDLSSVPECVLSSLETVEWVDYEGTEAERQLVEFILRNGSCLKKFVISPESVNPDKKYEMI</sequence>
<keyword id="KW-1185">Reference proteome</keyword>
<proteinExistence type="predicted"/>
<name>FBD19_ARATH</name>
<protein>
    <recommendedName>
        <fullName>Putative FBD-associated F-box protein At5g50270</fullName>
    </recommendedName>
</protein>
<comment type="sequence caution" evidence="1">
    <conflict type="erroneous gene model prediction">
        <sequence resource="EMBL-CDS" id="BAB09398"/>
    </conflict>
</comment>
<accession>Q9FGR8</accession>
<accession>F4K8W9</accession>
<organism>
    <name type="scientific">Arabidopsis thaliana</name>
    <name type="common">Mouse-ear cress</name>
    <dbReference type="NCBI Taxonomy" id="3702"/>
    <lineage>
        <taxon>Eukaryota</taxon>
        <taxon>Viridiplantae</taxon>
        <taxon>Streptophyta</taxon>
        <taxon>Embryophyta</taxon>
        <taxon>Tracheophyta</taxon>
        <taxon>Spermatophyta</taxon>
        <taxon>Magnoliopsida</taxon>
        <taxon>eudicotyledons</taxon>
        <taxon>Gunneridae</taxon>
        <taxon>Pentapetalae</taxon>
        <taxon>rosids</taxon>
        <taxon>malvids</taxon>
        <taxon>Brassicales</taxon>
        <taxon>Brassicaceae</taxon>
        <taxon>Camelineae</taxon>
        <taxon>Arabidopsis</taxon>
    </lineage>
</organism>
<gene>
    <name type="ordered locus">At5g50270</name>
    <name type="ORF">K6A12.13</name>
</gene>
<dbReference type="EMBL" id="AB024031">
    <property type="protein sequence ID" value="BAB09398.1"/>
    <property type="status" value="ALT_SEQ"/>
    <property type="molecule type" value="Genomic_DNA"/>
</dbReference>
<dbReference type="EMBL" id="CP002688">
    <property type="protein sequence ID" value="AED95920.2"/>
    <property type="molecule type" value="Genomic_DNA"/>
</dbReference>
<dbReference type="RefSeq" id="NP_001318772.1">
    <property type="nucleotide sequence ID" value="NM_001344884.1"/>
</dbReference>
<dbReference type="iPTMnet" id="Q9FGR8"/>
<dbReference type="PaxDb" id="3702-AT5G50270.1"/>
<dbReference type="ProteomicsDB" id="230755"/>
<dbReference type="EnsemblPlants" id="AT5G50270.1">
    <property type="protein sequence ID" value="AT5G50270.1"/>
    <property type="gene ID" value="AT5G50270"/>
</dbReference>
<dbReference type="GeneID" id="835092"/>
<dbReference type="Gramene" id="AT5G50270.1">
    <property type="protein sequence ID" value="AT5G50270.1"/>
    <property type="gene ID" value="AT5G50270"/>
</dbReference>
<dbReference type="KEGG" id="ath:AT5G50270"/>
<dbReference type="Araport" id="AT5G50270"/>
<dbReference type="TAIR" id="AT5G50270"/>
<dbReference type="InParanoid" id="Q9FGR8"/>
<dbReference type="OMA" id="PACQLEL"/>
<dbReference type="PRO" id="PR:Q9FGR8"/>
<dbReference type="Proteomes" id="UP000006548">
    <property type="component" value="Chromosome 5"/>
</dbReference>
<dbReference type="ExpressionAtlas" id="Q9FGR8">
    <property type="expression patterns" value="baseline and differential"/>
</dbReference>
<dbReference type="Gene3D" id="3.80.10.10">
    <property type="entry name" value="Ribonuclease Inhibitor"/>
    <property type="match status" value="1"/>
</dbReference>
<dbReference type="InterPro" id="IPR036047">
    <property type="entry name" value="F-box-like_dom_sf"/>
</dbReference>
<dbReference type="InterPro" id="IPR001810">
    <property type="entry name" value="F-box_dom"/>
</dbReference>
<dbReference type="InterPro" id="IPR006566">
    <property type="entry name" value="FBD"/>
</dbReference>
<dbReference type="InterPro" id="IPR050232">
    <property type="entry name" value="FBL13/AtMIF1-like"/>
</dbReference>
<dbReference type="InterPro" id="IPR032675">
    <property type="entry name" value="LRR_dom_sf"/>
</dbReference>
<dbReference type="InterPro" id="IPR055411">
    <property type="entry name" value="LRR_FXL15/At3g58940/PEG3-like"/>
</dbReference>
<dbReference type="PANTHER" id="PTHR31900:SF34">
    <property type="entry name" value="EMB|CAB62440.1-RELATED"/>
    <property type="match status" value="1"/>
</dbReference>
<dbReference type="PANTHER" id="PTHR31900">
    <property type="entry name" value="F-BOX/RNI SUPERFAMILY PROTEIN-RELATED"/>
    <property type="match status" value="1"/>
</dbReference>
<dbReference type="Pfam" id="PF00646">
    <property type="entry name" value="F-box"/>
    <property type="match status" value="1"/>
</dbReference>
<dbReference type="Pfam" id="PF08387">
    <property type="entry name" value="FBD"/>
    <property type="match status" value="1"/>
</dbReference>
<dbReference type="Pfam" id="PF24758">
    <property type="entry name" value="LRR_At5g56370"/>
    <property type="match status" value="1"/>
</dbReference>
<dbReference type="SMART" id="SM00579">
    <property type="entry name" value="FBD"/>
    <property type="match status" value="1"/>
</dbReference>
<dbReference type="SUPFAM" id="SSF81383">
    <property type="entry name" value="F-box domain"/>
    <property type="match status" value="1"/>
</dbReference>
<dbReference type="SUPFAM" id="SSF52047">
    <property type="entry name" value="RNI-like"/>
    <property type="match status" value="1"/>
</dbReference>